<evidence type="ECO:0000250" key="1"/>
<evidence type="ECO:0000255" key="2"/>
<evidence type="ECO:0000255" key="3">
    <source>
        <dbReference type="PROSITE-ProRule" id="PRU00274"/>
    </source>
</evidence>
<evidence type="ECO:0000269" key="4">
    <source>
    </source>
</evidence>
<evidence type="ECO:0000269" key="5">
    <source>
    </source>
</evidence>
<evidence type="ECO:0000269" key="6">
    <source>
    </source>
</evidence>
<evidence type="ECO:0000305" key="7"/>
<comment type="function">
    <text evidence="5 6">Snake venom serine protease that has fibrinogenolytic activities by hydrolyzing the beta chain of fibrinogen (FGB). Typical arginine esterase which hydrolyzes esters and amides of arginine.</text>
</comment>
<comment type="activity regulation">
    <text evidence="6">Inhibited by diisopropylfluorophosphate (DFP) and PMSF.</text>
</comment>
<comment type="biophysicochemical properties">
    <kinetics>
        <KM evidence="6">77 uM for N-alpha-benzoyl-L-arginine ethyl ester (BAEE) (at pH 8.5 and 25 degrees Celsius)</KM>
        <KM evidence="6">0.36 mM for Tosyl-L-arginine methyl ester (TAME) (at pH 8.5 and 25 degrees Celsius)</KM>
        <KM evidence="6">0.18 mM for BAPNA (at pH 8.3 and 25 degrees Celsius)</KM>
    </kinetics>
</comment>
<comment type="subunit">
    <text evidence="1">Monomer.</text>
</comment>
<comment type="subcellular location">
    <subcellularLocation>
        <location evidence="1">Secreted</location>
    </subcellularLocation>
</comment>
<comment type="tissue specificity">
    <text>Expressed by the venom gland.</text>
</comment>
<comment type="PTM">
    <text evidence="4">Glycosylated. Contains 23.0% of hexoses, 8.3% of hexosamines and 1.0% of sialic acids.</text>
</comment>
<comment type="mass spectrometry"/>
<comment type="similarity">
    <text evidence="3">Belongs to the peptidase S1 family. Snake venom subfamily.</text>
</comment>
<keyword id="KW-0903">Direct protein sequencing</keyword>
<keyword id="KW-1015">Disulfide bond</keyword>
<keyword id="KW-1206">Fibrinogenolytic toxin</keyword>
<keyword id="KW-0325">Glycoprotein</keyword>
<keyword id="KW-1199">Hemostasis impairing toxin</keyword>
<keyword id="KW-0378">Hydrolase</keyword>
<keyword id="KW-0645">Protease</keyword>
<keyword id="KW-0964">Secreted</keyword>
<keyword id="KW-0720">Serine protease</keyword>
<keyword id="KW-0730">Sialic acid</keyword>
<keyword id="KW-0732">Signal</keyword>
<keyword id="KW-0800">Toxin</keyword>
<keyword id="KW-0865">Zymogen</keyword>
<dbReference type="EC" id="3.4.21.-"/>
<dbReference type="EMBL" id="GU570566">
    <property type="protein sequence ID" value="ADN04917.1"/>
    <property type="molecule type" value="mRNA"/>
</dbReference>
<dbReference type="SMR" id="E0Y419"/>
<dbReference type="MEROPS" id="S01.520"/>
<dbReference type="BRENDA" id="3.4.21.74">
    <property type="organism ID" value="6665"/>
</dbReference>
<dbReference type="SABIO-RK" id="E0Y419"/>
<dbReference type="GO" id="GO:0005576">
    <property type="term" value="C:extracellular region"/>
    <property type="evidence" value="ECO:0007669"/>
    <property type="project" value="UniProtKB-SubCell"/>
</dbReference>
<dbReference type="GO" id="GO:0030141">
    <property type="term" value="C:secretory granule"/>
    <property type="evidence" value="ECO:0007669"/>
    <property type="project" value="TreeGrafter"/>
</dbReference>
<dbReference type="GO" id="GO:0004252">
    <property type="term" value="F:serine-type endopeptidase activity"/>
    <property type="evidence" value="ECO:0007669"/>
    <property type="project" value="InterPro"/>
</dbReference>
<dbReference type="GO" id="GO:0090729">
    <property type="term" value="F:toxin activity"/>
    <property type="evidence" value="ECO:0007669"/>
    <property type="project" value="UniProtKB-KW"/>
</dbReference>
<dbReference type="GO" id="GO:0006508">
    <property type="term" value="P:proteolysis"/>
    <property type="evidence" value="ECO:0007669"/>
    <property type="project" value="UniProtKB-KW"/>
</dbReference>
<dbReference type="CDD" id="cd00190">
    <property type="entry name" value="Tryp_SPc"/>
    <property type="match status" value="1"/>
</dbReference>
<dbReference type="FunFam" id="2.40.10.10:FF:000158">
    <property type="entry name" value="Thrombin-like enzyme saxthrombin"/>
    <property type="match status" value="1"/>
</dbReference>
<dbReference type="Gene3D" id="2.40.10.10">
    <property type="entry name" value="Trypsin-like serine proteases"/>
    <property type="match status" value="2"/>
</dbReference>
<dbReference type="InterPro" id="IPR009003">
    <property type="entry name" value="Peptidase_S1_PA"/>
</dbReference>
<dbReference type="InterPro" id="IPR043504">
    <property type="entry name" value="Peptidase_S1_PA_chymotrypsin"/>
</dbReference>
<dbReference type="InterPro" id="IPR001314">
    <property type="entry name" value="Peptidase_S1A"/>
</dbReference>
<dbReference type="InterPro" id="IPR001254">
    <property type="entry name" value="Trypsin_dom"/>
</dbReference>
<dbReference type="InterPro" id="IPR018114">
    <property type="entry name" value="TRYPSIN_HIS"/>
</dbReference>
<dbReference type="InterPro" id="IPR033116">
    <property type="entry name" value="TRYPSIN_SER"/>
</dbReference>
<dbReference type="PANTHER" id="PTHR24271:SF47">
    <property type="entry name" value="KALLIKREIN-1"/>
    <property type="match status" value="1"/>
</dbReference>
<dbReference type="PANTHER" id="PTHR24271">
    <property type="entry name" value="KALLIKREIN-RELATED"/>
    <property type="match status" value="1"/>
</dbReference>
<dbReference type="Pfam" id="PF00089">
    <property type="entry name" value="Trypsin"/>
    <property type="match status" value="1"/>
</dbReference>
<dbReference type="PRINTS" id="PR00722">
    <property type="entry name" value="CHYMOTRYPSIN"/>
</dbReference>
<dbReference type="SMART" id="SM00020">
    <property type="entry name" value="Tryp_SPc"/>
    <property type="match status" value="1"/>
</dbReference>
<dbReference type="SUPFAM" id="SSF50494">
    <property type="entry name" value="Trypsin-like serine proteases"/>
    <property type="match status" value="1"/>
</dbReference>
<dbReference type="PROSITE" id="PS50240">
    <property type="entry name" value="TRYPSIN_DOM"/>
    <property type="match status" value="1"/>
</dbReference>
<dbReference type="PROSITE" id="PS00134">
    <property type="entry name" value="TRYPSIN_HIS"/>
    <property type="match status" value="1"/>
</dbReference>
<dbReference type="PROSITE" id="PS00135">
    <property type="entry name" value="TRYPSIN_SER"/>
    <property type="match status" value="1"/>
</dbReference>
<reference key="1">
    <citation type="journal article" date="2011" name="Biochimie">
        <title>A new tyrosine-specific chymotrypsin-like and angiotensin-degrading serine proteinase from Vipera lebetina snake venom.</title>
        <authorList>
            <person name="Siigur E."/>
            <person name="Tonismagi K."/>
            <person name="Trummal K."/>
            <person name="Samel M."/>
            <person name="Vija H."/>
            <person name="Aaspollu A."/>
            <person name="Ronnholm G."/>
            <person name="Subbi J."/>
            <person name="Kalkkinen N."/>
            <person name="Siigur J."/>
        </authorList>
    </citation>
    <scope>NUCLEOTIDE SEQUENCE [MRNA]</scope>
    <source>
        <tissue>Venom</tissue>
    </source>
</reference>
<reference key="2">
    <citation type="journal article" date="2002" name="Toxicon">
        <title>Biochemical characterization of fibrinogenolytic serine proteinases from Vipera lebetina snake venom.</title>
        <authorList>
            <person name="Samel M."/>
            <person name="Subbi J."/>
            <person name="Siigur J."/>
            <person name="Siigur E."/>
        </authorList>
    </citation>
    <scope>PROTEIN SEQUENCE OF 25-43</scope>
    <scope>GLYCOSYLATION</scope>
    <scope>SIALIC ACID CONTENT</scope>
    <scope>MASS SPECTROMETRY</scope>
</reference>
<reference key="3">
    <citation type="journal article" date="1991" name="Toxicon">
        <title>Beta-fibrinogenase from the venom of Vipera lebetina.</title>
        <authorList>
            <person name="Siigur E."/>
            <person name="Mahar A."/>
            <person name="Siigur J."/>
        </authorList>
    </citation>
    <scope>FUNCTION</scope>
    <scope>ACTIVITY REGULATION</scope>
    <scope>BIOPHYSICOCHEMICAL PROPERTIES</scope>
    <source>
        <tissue>Venom</tissue>
    </source>
</reference>
<reference key="4">
    <citation type="journal article" date="2001" name="Haemostasis">
        <title>Proteases from Vipera lebetina venom affecting coagulation and fibrinolysis.</title>
        <authorList>
            <person name="Siigur J."/>
            <person name="Aaspollu A."/>
            <person name="Tonismagi K."/>
            <person name="Trummal K."/>
            <person name="Samel M."/>
            <person name="Vija H."/>
            <person name="Subbi J."/>
            <person name="Siigur E."/>
        </authorList>
    </citation>
    <scope>FUNCTION</scope>
</reference>
<accession>E0Y419</accession>
<proteinExistence type="evidence at protein level"/>
<organism>
    <name type="scientific">Macrovipera lebetinus</name>
    <name type="common">Levantine viper</name>
    <name type="synonym">Vipera lebetina</name>
    <dbReference type="NCBI Taxonomy" id="3148341"/>
    <lineage>
        <taxon>Eukaryota</taxon>
        <taxon>Metazoa</taxon>
        <taxon>Chordata</taxon>
        <taxon>Craniata</taxon>
        <taxon>Vertebrata</taxon>
        <taxon>Euteleostomi</taxon>
        <taxon>Lepidosauria</taxon>
        <taxon>Squamata</taxon>
        <taxon>Bifurcata</taxon>
        <taxon>Unidentata</taxon>
        <taxon>Episquamata</taxon>
        <taxon>Toxicofera</taxon>
        <taxon>Serpentes</taxon>
        <taxon>Colubroidea</taxon>
        <taxon>Viperidae</taxon>
        <taxon>Viperinae</taxon>
        <taxon>Macrovipera</taxon>
    </lineage>
</organism>
<sequence>MVLIRVLANLLLLQLSHAQKSSELVVGGDECNINEHRSLVFLYNSSFGCGGTLINQEWVLSAAHCDMENMRIYLGWHNFSLPNMNQKRRVAKEKFFCLSSKNYTEWDKDIMLIKMNRPVTYSTHVAPLSLPSSPPSVGSVCRIMGWGAITSPNETYPDVPHCANINILNYTVCRAAHPWLPAQSRTLCAGILQGGIDTCKGDSGGPLICNGQIQGIVSWGDNPCAQPLKPGHYTNVFDYTDWIQSIIAGNTTATCPP</sequence>
<feature type="signal peptide" evidence="2">
    <location>
        <begin position="1"/>
        <end position="18"/>
    </location>
</feature>
<feature type="propeptide" id="PRO_0000416403" evidence="4">
    <location>
        <begin position="19"/>
        <end position="24"/>
    </location>
</feature>
<feature type="chain" id="PRO_0000416404" description="Beta-fibrinogenase">
    <location>
        <begin position="25"/>
        <end position="257"/>
    </location>
</feature>
<feature type="domain" description="Peptidase S1" evidence="3">
    <location>
        <begin position="25"/>
        <end position="248"/>
    </location>
</feature>
<feature type="active site" description="Charge relay system" evidence="1">
    <location>
        <position position="64"/>
    </location>
</feature>
<feature type="active site" description="Charge relay system" evidence="1">
    <location>
        <position position="109"/>
    </location>
</feature>
<feature type="active site" description="Charge relay system" evidence="1">
    <location>
        <position position="203"/>
    </location>
</feature>
<feature type="glycosylation site" description="N-linked (GlcNAc...) asparagine" evidence="2">
    <location>
        <position position="44"/>
    </location>
</feature>
<feature type="glycosylation site" description="N-linked (GlcNAc...) asparagine" evidence="2">
    <location>
        <position position="78"/>
    </location>
</feature>
<feature type="glycosylation site" description="N-linked (GlcNAc...) asparagine" evidence="2">
    <location>
        <position position="102"/>
    </location>
</feature>
<feature type="glycosylation site" description="N-linked (GlcNAc...) asparagine" evidence="2">
    <location>
        <position position="153"/>
    </location>
</feature>
<feature type="glycosylation site" description="N-linked (GlcNAc...) asparagine" evidence="2">
    <location>
        <position position="169"/>
    </location>
</feature>
<feature type="glycosylation site" description="N-linked (GlcNAc...) asparagine" evidence="2">
    <location>
        <position position="250"/>
    </location>
</feature>
<feature type="disulfide bond" evidence="3">
    <location>
        <begin position="31"/>
        <end position="162"/>
    </location>
</feature>
<feature type="disulfide bond" evidence="3">
    <location>
        <begin position="49"/>
        <end position="65"/>
    </location>
</feature>
<feature type="disulfide bond" evidence="3">
    <location>
        <begin position="97"/>
        <end position="255"/>
    </location>
</feature>
<feature type="disulfide bond" evidence="3">
    <location>
        <begin position="141"/>
        <end position="209"/>
    </location>
</feature>
<feature type="disulfide bond" evidence="3">
    <location>
        <begin position="173"/>
        <end position="188"/>
    </location>
</feature>
<feature type="disulfide bond" evidence="3">
    <location>
        <begin position="199"/>
        <end position="224"/>
    </location>
</feature>
<feature type="sequence conflict" description="In Ref. 2; AA sequence." evidence="7" ref="2">
    <original>I</original>
    <variation>K</variation>
    <location>
        <position position="33"/>
    </location>
</feature>
<protein>
    <recommendedName>
        <fullName>Beta-fibrinogenase</fullName>
        <shortName>VLBF</shortName>
        <ecNumber>3.4.21.-</ecNumber>
    </recommendedName>
    <alternativeName>
        <fullName>Snake venom serine protease</fullName>
        <shortName>SVSP</shortName>
    </alternativeName>
</protein>
<name>VSPBF_MACLB</name>